<name>KDSRA_ARATH</name>
<keyword id="KW-0256">Endoplasmic reticulum</keyword>
<keyword id="KW-0443">Lipid metabolism</keyword>
<keyword id="KW-0472">Membrane</keyword>
<keyword id="KW-0521">NADP</keyword>
<keyword id="KW-0547">Nucleotide-binding</keyword>
<keyword id="KW-0560">Oxidoreductase</keyword>
<keyword id="KW-1185">Reference proteome</keyword>
<keyword id="KW-0746">Sphingolipid metabolism</keyword>
<keyword id="KW-0812">Transmembrane</keyword>
<keyword id="KW-1133">Transmembrane helix</keyword>
<evidence type="ECO:0000250" key="1">
    <source>
        <dbReference type="UniProtKB" id="O93868"/>
    </source>
</evidence>
<evidence type="ECO:0000250" key="2">
    <source>
        <dbReference type="UniProtKB" id="P0CR36"/>
    </source>
</evidence>
<evidence type="ECO:0000250" key="3">
    <source>
        <dbReference type="UniProtKB" id="P40471"/>
    </source>
</evidence>
<evidence type="ECO:0000255" key="4"/>
<evidence type="ECO:0000255" key="5">
    <source>
        <dbReference type="PROSITE-ProRule" id="PRU10001"/>
    </source>
</evidence>
<evidence type="ECO:0000269" key="6">
    <source>
    </source>
</evidence>
<evidence type="ECO:0000305" key="7"/>
<evidence type="ECO:0000305" key="8">
    <source>
    </source>
</evidence>
<protein>
    <recommendedName>
        <fullName>3-dehydrosphinganine reductase TSC10A</fullName>
        <ecNumber>1.1.1.102</ecNumber>
    </recommendedName>
    <alternativeName>
        <fullName>3-ketodihydrosphingosine reductase</fullName>
        <shortName>KDS reductase</shortName>
    </alternativeName>
    <alternativeName>
        <fullName>3-ketosphinganine reductase</fullName>
    </alternativeName>
</protein>
<gene>
    <name type="primary">TSC10A</name>
    <name type="ordered locus">At3g06060</name>
    <name type="ORF">F24F17.4</name>
</gene>
<proteinExistence type="evidence at protein level"/>
<feature type="chain" id="PRO_0000430305" description="3-dehydrosphinganine reductase TSC10A">
    <location>
        <begin position="1"/>
        <end position="326"/>
    </location>
</feature>
<feature type="topological domain" description="Lumenal" evidence="4">
    <location>
        <begin position="1"/>
        <end position="7"/>
    </location>
</feature>
<feature type="transmembrane region" description="Helical; Name=1" evidence="4">
    <location>
        <begin position="8"/>
        <end position="28"/>
    </location>
</feature>
<feature type="topological domain" description="Cytoplasmic" evidence="4">
    <location>
        <begin position="29"/>
        <end position="264"/>
    </location>
</feature>
<feature type="transmembrane region" description="Helical; Name=2" evidence="4">
    <location>
        <begin position="265"/>
        <end position="285"/>
    </location>
</feature>
<feature type="topological domain" description="Lumenal" evidence="4">
    <location>
        <begin position="286"/>
        <end position="288"/>
    </location>
</feature>
<feature type="transmembrane region" description="Helical; Name=3" evidence="4">
    <location>
        <begin position="289"/>
        <end position="309"/>
    </location>
</feature>
<feature type="topological domain" description="Cytoplasmic" evidence="4">
    <location>
        <begin position="310"/>
        <end position="326"/>
    </location>
</feature>
<feature type="short sequence motif" description="GXSXG" evidence="3">
    <location>
        <begin position="46"/>
        <end position="50"/>
    </location>
</feature>
<feature type="active site" description="Proton donor" evidence="1">
    <location>
        <position position="174"/>
    </location>
</feature>
<feature type="active site" description="Proton acceptor" evidence="5">
    <location>
        <position position="188"/>
    </location>
</feature>
<feature type="active site" description="Lowers pKa of active site Tyr" evidence="1">
    <location>
        <position position="192"/>
    </location>
</feature>
<feature type="binding site" evidence="2">
    <location>
        <position position="46"/>
    </location>
    <ligand>
        <name>NADPH</name>
        <dbReference type="ChEBI" id="CHEBI:57783"/>
    </ligand>
</feature>
<feature type="binding site" evidence="2">
    <location>
        <position position="48"/>
    </location>
    <ligand>
        <name>NADPH</name>
        <dbReference type="ChEBI" id="CHEBI:57783"/>
    </ligand>
</feature>
<feature type="binding site" evidence="2">
    <location>
        <position position="49"/>
    </location>
    <ligand>
        <name>NADPH</name>
        <dbReference type="ChEBI" id="CHEBI:57783"/>
    </ligand>
</feature>
<feature type="binding site" evidence="2">
    <location>
        <position position="50"/>
    </location>
    <ligand>
        <name>NADPH</name>
        <dbReference type="ChEBI" id="CHEBI:57783"/>
    </ligand>
</feature>
<feature type="binding site" evidence="2">
    <location>
        <position position="71"/>
    </location>
    <ligand>
        <name>NADPH</name>
        <dbReference type="ChEBI" id="CHEBI:57783"/>
    </ligand>
</feature>
<feature type="binding site" evidence="2">
    <location>
        <position position="75"/>
    </location>
    <ligand>
        <name>NADPH</name>
        <dbReference type="ChEBI" id="CHEBI:57783"/>
    </ligand>
</feature>
<feature type="binding site" evidence="2">
    <location>
        <position position="97"/>
    </location>
    <ligand>
        <name>NADPH</name>
        <dbReference type="ChEBI" id="CHEBI:57783"/>
    </ligand>
</feature>
<feature type="binding site" evidence="1">
    <location>
        <position position="188"/>
    </location>
    <ligand>
        <name>NADP(+)</name>
        <dbReference type="ChEBI" id="CHEBI:58349"/>
    </ligand>
</feature>
<feature type="binding site" evidence="1">
    <location>
        <position position="192"/>
    </location>
    <ligand>
        <name>NADP(+)</name>
        <dbReference type="ChEBI" id="CHEBI:58349"/>
    </ligand>
</feature>
<comment type="function">
    <text evidence="6">Catalyzes the reduction of 3'-oxosphinganine (3-ketodihydrosphingosine/KDS) to sphinganine (dihydrosphingosine/DHS), the second step of de novo sphingolipid biosynthesis. In plants, sphingolipids seems to play a critical role in mineral ion homeostasis, most likely through their involvement in the ion transport functionalities of membrane systems in the root. Lacks stereospecificity and can also produce L-threo-DHS in addition to D-erythro-DHS.</text>
</comment>
<comment type="catalytic activity">
    <reaction evidence="6">
        <text>sphinganine + NADP(+) = 3-oxosphinganine + NADPH + H(+)</text>
        <dbReference type="Rhea" id="RHEA:22640"/>
        <dbReference type="ChEBI" id="CHEBI:15378"/>
        <dbReference type="ChEBI" id="CHEBI:57783"/>
        <dbReference type="ChEBI" id="CHEBI:57817"/>
        <dbReference type="ChEBI" id="CHEBI:58299"/>
        <dbReference type="ChEBI" id="CHEBI:58349"/>
        <dbReference type="EC" id="1.1.1.102"/>
    </reaction>
</comment>
<comment type="pathway">
    <text>Lipid metabolism; sphingolipid metabolism.</text>
</comment>
<comment type="subcellular location">
    <subcellularLocation>
        <location evidence="8">Endoplasmic reticulum membrane</location>
        <topology evidence="8">Multi-pass membrane protein</topology>
    </subcellularLocation>
</comment>
<comment type="tissue specificity">
    <text evidence="6">Expressed in roots, leaves, stems, flowers and siliques.</text>
</comment>
<comment type="disruption phenotype">
    <text evidence="6">High frequency of tricotyledons and altered flower morphology. The double mutants tsc10a and tsc10b are not viable.</text>
</comment>
<comment type="similarity">
    <text evidence="7">Belongs to the short-chain dehydrogenases/reductases (SDR) family.</text>
</comment>
<comment type="sequence caution" evidence="7">
    <conflict type="erroneous gene model prediction">
        <sequence resource="EMBL-CDS" id="AAF66134"/>
    </conflict>
</comment>
<comment type="sequence caution" evidence="7">
    <conflict type="miscellaneous discrepancy">
        <sequence resource="EMBL-CDS" id="AAO24564"/>
    </conflict>
    <text>Sequencing errors.</text>
</comment>
<organism>
    <name type="scientific">Arabidopsis thaliana</name>
    <name type="common">Mouse-ear cress</name>
    <dbReference type="NCBI Taxonomy" id="3702"/>
    <lineage>
        <taxon>Eukaryota</taxon>
        <taxon>Viridiplantae</taxon>
        <taxon>Streptophyta</taxon>
        <taxon>Embryophyta</taxon>
        <taxon>Tracheophyta</taxon>
        <taxon>Spermatophyta</taxon>
        <taxon>Magnoliopsida</taxon>
        <taxon>eudicotyledons</taxon>
        <taxon>Gunneridae</taxon>
        <taxon>Pentapetalae</taxon>
        <taxon>rosids</taxon>
        <taxon>malvids</taxon>
        <taxon>Brassicales</taxon>
        <taxon>Brassicaceae</taxon>
        <taxon>Camelineae</taxon>
        <taxon>Arabidopsis</taxon>
    </lineage>
</organism>
<dbReference type="EC" id="1.1.1.102"/>
<dbReference type="EMBL" id="AC068073">
    <property type="protein sequence ID" value="AAF66134.1"/>
    <property type="status" value="ALT_SEQ"/>
    <property type="molecule type" value="Genomic_DNA"/>
</dbReference>
<dbReference type="EMBL" id="CP002686">
    <property type="protein sequence ID" value="AEE74338.1"/>
    <property type="molecule type" value="Genomic_DNA"/>
</dbReference>
<dbReference type="EMBL" id="BT003132">
    <property type="protein sequence ID" value="AAO24564.1"/>
    <property type="status" value="ALT_SEQ"/>
    <property type="molecule type" value="mRNA"/>
</dbReference>
<dbReference type="EMBL" id="AK228314">
    <property type="protein sequence ID" value="BAF00257.1"/>
    <property type="molecule type" value="mRNA"/>
</dbReference>
<dbReference type="RefSeq" id="NP_187257.2">
    <property type="nucleotide sequence ID" value="NM_111481.3"/>
</dbReference>
<dbReference type="SMR" id="Q0WRJ2"/>
<dbReference type="FunCoup" id="Q0WRJ2">
    <property type="interactions" value="3528"/>
</dbReference>
<dbReference type="STRING" id="3702.Q0WRJ2"/>
<dbReference type="iPTMnet" id="Q0WRJ2"/>
<dbReference type="PaxDb" id="3702-AT3G06060.1"/>
<dbReference type="ProteomicsDB" id="234206"/>
<dbReference type="EnsemblPlants" id="AT3G06060.1">
    <property type="protein sequence ID" value="AT3G06060.1"/>
    <property type="gene ID" value="AT3G06060"/>
</dbReference>
<dbReference type="GeneID" id="819779"/>
<dbReference type="Gramene" id="AT3G06060.1">
    <property type="protein sequence ID" value="AT3G06060.1"/>
    <property type="gene ID" value="AT3G06060"/>
</dbReference>
<dbReference type="KEGG" id="ath:AT3G06060"/>
<dbReference type="Araport" id="AT3G06060"/>
<dbReference type="TAIR" id="AT3G06060">
    <property type="gene designation" value="TSC10A"/>
</dbReference>
<dbReference type="eggNOG" id="KOG1210">
    <property type="taxonomic scope" value="Eukaryota"/>
</dbReference>
<dbReference type="HOGENOM" id="CLU_010194_3_2_1"/>
<dbReference type="InParanoid" id="Q0WRJ2"/>
<dbReference type="BioCyc" id="MetaCyc:AT3G06060-MONOMER"/>
<dbReference type="UniPathway" id="UPA00222"/>
<dbReference type="PRO" id="PR:Q0WRJ2"/>
<dbReference type="Proteomes" id="UP000006548">
    <property type="component" value="Chromosome 3"/>
</dbReference>
<dbReference type="ExpressionAtlas" id="Q0WRJ2">
    <property type="expression patterns" value="baseline and differential"/>
</dbReference>
<dbReference type="GO" id="GO:0005789">
    <property type="term" value="C:endoplasmic reticulum membrane"/>
    <property type="evidence" value="ECO:0000314"/>
    <property type="project" value="TAIR"/>
</dbReference>
<dbReference type="GO" id="GO:0047560">
    <property type="term" value="F:3-dehydrosphinganine reductase activity"/>
    <property type="evidence" value="ECO:0000314"/>
    <property type="project" value="TAIR"/>
</dbReference>
<dbReference type="GO" id="GO:0070402">
    <property type="term" value="F:NADPH binding"/>
    <property type="evidence" value="ECO:0000250"/>
    <property type="project" value="UniProtKB"/>
</dbReference>
<dbReference type="GO" id="GO:0006666">
    <property type="term" value="P:3-keto-sphinganine metabolic process"/>
    <property type="evidence" value="ECO:0000250"/>
    <property type="project" value="UniProtKB"/>
</dbReference>
<dbReference type="GO" id="GO:0030148">
    <property type="term" value="P:sphingolipid biosynthetic process"/>
    <property type="evidence" value="ECO:0000315"/>
    <property type="project" value="TAIR"/>
</dbReference>
<dbReference type="CDD" id="cd08939">
    <property type="entry name" value="KDSR-like_SDR_c"/>
    <property type="match status" value="1"/>
</dbReference>
<dbReference type="FunFam" id="3.40.50.720:FF:000165">
    <property type="entry name" value="3-ketodihydrosphingosine reductase"/>
    <property type="match status" value="1"/>
</dbReference>
<dbReference type="Gene3D" id="3.40.50.720">
    <property type="entry name" value="NAD(P)-binding Rossmann-like Domain"/>
    <property type="match status" value="1"/>
</dbReference>
<dbReference type="InterPro" id="IPR045022">
    <property type="entry name" value="KDSR-like"/>
</dbReference>
<dbReference type="InterPro" id="IPR036291">
    <property type="entry name" value="NAD(P)-bd_dom_sf"/>
</dbReference>
<dbReference type="InterPro" id="IPR020904">
    <property type="entry name" value="Sc_DH/Rdtase_CS"/>
</dbReference>
<dbReference type="InterPro" id="IPR002347">
    <property type="entry name" value="SDR_fam"/>
</dbReference>
<dbReference type="PANTHER" id="PTHR43550:SF8">
    <property type="entry name" value="3-DEHYDROSPHINGANINE REDUCTASE TSC10A"/>
    <property type="match status" value="1"/>
</dbReference>
<dbReference type="PANTHER" id="PTHR43550">
    <property type="entry name" value="3-KETODIHYDROSPHINGOSINE REDUCTASE"/>
    <property type="match status" value="1"/>
</dbReference>
<dbReference type="Pfam" id="PF00106">
    <property type="entry name" value="adh_short"/>
    <property type="match status" value="1"/>
</dbReference>
<dbReference type="PRINTS" id="PR00081">
    <property type="entry name" value="GDHRDH"/>
</dbReference>
<dbReference type="SUPFAM" id="SSF51735">
    <property type="entry name" value="NAD(P)-binding Rossmann-fold domains"/>
    <property type="match status" value="1"/>
</dbReference>
<dbReference type="PROSITE" id="PS00061">
    <property type="entry name" value="ADH_SHORT"/>
    <property type="match status" value="1"/>
</dbReference>
<reference key="1">
    <citation type="journal article" date="2000" name="Nature">
        <title>Sequence and analysis of chromosome 3 of the plant Arabidopsis thaliana.</title>
        <authorList>
            <person name="Salanoubat M."/>
            <person name="Lemcke K."/>
            <person name="Rieger M."/>
            <person name="Ansorge W."/>
            <person name="Unseld M."/>
            <person name="Fartmann B."/>
            <person name="Valle G."/>
            <person name="Bloecker H."/>
            <person name="Perez-Alonso M."/>
            <person name="Obermaier B."/>
            <person name="Delseny M."/>
            <person name="Boutry M."/>
            <person name="Grivell L.A."/>
            <person name="Mache R."/>
            <person name="Puigdomenech P."/>
            <person name="De Simone V."/>
            <person name="Choisne N."/>
            <person name="Artiguenave F."/>
            <person name="Robert C."/>
            <person name="Brottier P."/>
            <person name="Wincker P."/>
            <person name="Cattolico L."/>
            <person name="Weissenbach J."/>
            <person name="Saurin W."/>
            <person name="Quetier F."/>
            <person name="Schaefer M."/>
            <person name="Mueller-Auer S."/>
            <person name="Gabel C."/>
            <person name="Fuchs M."/>
            <person name="Benes V."/>
            <person name="Wurmbach E."/>
            <person name="Drzonek H."/>
            <person name="Erfle H."/>
            <person name="Jordan N."/>
            <person name="Bangert S."/>
            <person name="Wiedelmann R."/>
            <person name="Kranz H."/>
            <person name="Voss H."/>
            <person name="Holland R."/>
            <person name="Brandt P."/>
            <person name="Nyakatura G."/>
            <person name="Vezzi A."/>
            <person name="D'Angelo M."/>
            <person name="Pallavicini A."/>
            <person name="Toppo S."/>
            <person name="Simionati B."/>
            <person name="Conrad A."/>
            <person name="Hornischer K."/>
            <person name="Kauer G."/>
            <person name="Loehnert T.-H."/>
            <person name="Nordsiek G."/>
            <person name="Reichelt J."/>
            <person name="Scharfe M."/>
            <person name="Schoen O."/>
            <person name="Bargues M."/>
            <person name="Terol J."/>
            <person name="Climent J."/>
            <person name="Navarro P."/>
            <person name="Collado C."/>
            <person name="Perez-Perez A."/>
            <person name="Ottenwaelder B."/>
            <person name="Duchemin D."/>
            <person name="Cooke R."/>
            <person name="Laudie M."/>
            <person name="Berger-Llauro C."/>
            <person name="Purnelle B."/>
            <person name="Masuy D."/>
            <person name="de Haan M."/>
            <person name="Maarse A.C."/>
            <person name="Alcaraz J.-P."/>
            <person name="Cottet A."/>
            <person name="Casacuberta E."/>
            <person name="Monfort A."/>
            <person name="Argiriou A."/>
            <person name="Flores M."/>
            <person name="Liguori R."/>
            <person name="Vitale D."/>
            <person name="Mannhaupt G."/>
            <person name="Haase D."/>
            <person name="Schoof H."/>
            <person name="Rudd S."/>
            <person name="Zaccaria P."/>
            <person name="Mewes H.-W."/>
            <person name="Mayer K.F.X."/>
            <person name="Kaul S."/>
            <person name="Town C.D."/>
            <person name="Koo H.L."/>
            <person name="Tallon L.J."/>
            <person name="Jenkins J."/>
            <person name="Rooney T."/>
            <person name="Rizzo M."/>
            <person name="Walts A."/>
            <person name="Utterback T."/>
            <person name="Fujii C.Y."/>
            <person name="Shea T.P."/>
            <person name="Creasy T.H."/>
            <person name="Haas B."/>
            <person name="Maiti R."/>
            <person name="Wu D."/>
            <person name="Peterson J."/>
            <person name="Van Aken S."/>
            <person name="Pai G."/>
            <person name="Militscher J."/>
            <person name="Sellers P."/>
            <person name="Gill J.E."/>
            <person name="Feldblyum T.V."/>
            <person name="Preuss D."/>
            <person name="Lin X."/>
            <person name="Nierman W.C."/>
            <person name="Salzberg S.L."/>
            <person name="White O."/>
            <person name="Venter J.C."/>
            <person name="Fraser C.M."/>
            <person name="Kaneko T."/>
            <person name="Nakamura Y."/>
            <person name="Sato S."/>
            <person name="Kato T."/>
            <person name="Asamizu E."/>
            <person name="Sasamoto S."/>
            <person name="Kimura T."/>
            <person name="Idesawa K."/>
            <person name="Kawashima K."/>
            <person name="Kishida Y."/>
            <person name="Kiyokawa C."/>
            <person name="Kohara M."/>
            <person name="Matsumoto M."/>
            <person name="Matsuno A."/>
            <person name="Muraki A."/>
            <person name="Nakayama S."/>
            <person name="Nakazaki N."/>
            <person name="Shinpo S."/>
            <person name="Takeuchi C."/>
            <person name="Wada T."/>
            <person name="Watanabe A."/>
            <person name="Yamada M."/>
            <person name="Yasuda M."/>
            <person name="Tabata S."/>
        </authorList>
    </citation>
    <scope>NUCLEOTIDE SEQUENCE [LARGE SCALE GENOMIC DNA]</scope>
    <source>
        <strain>cv. Columbia</strain>
    </source>
</reference>
<reference key="2">
    <citation type="journal article" date="2017" name="Plant J.">
        <title>Araport11: a complete reannotation of the Arabidopsis thaliana reference genome.</title>
        <authorList>
            <person name="Cheng C.Y."/>
            <person name="Krishnakumar V."/>
            <person name="Chan A.P."/>
            <person name="Thibaud-Nissen F."/>
            <person name="Schobel S."/>
            <person name="Town C.D."/>
        </authorList>
    </citation>
    <scope>GENOME REANNOTATION</scope>
    <source>
        <strain>cv. Columbia</strain>
    </source>
</reference>
<reference key="3">
    <citation type="journal article" date="2003" name="Science">
        <title>Empirical analysis of transcriptional activity in the Arabidopsis genome.</title>
        <authorList>
            <person name="Yamada K."/>
            <person name="Lim J."/>
            <person name="Dale J.M."/>
            <person name="Chen H."/>
            <person name="Shinn P."/>
            <person name="Palm C.J."/>
            <person name="Southwick A.M."/>
            <person name="Wu H.C."/>
            <person name="Kim C.J."/>
            <person name="Nguyen M."/>
            <person name="Pham P.K."/>
            <person name="Cheuk R.F."/>
            <person name="Karlin-Newmann G."/>
            <person name="Liu S.X."/>
            <person name="Lam B."/>
            <person name="Sakano H."/>
            <person name="Wu T."/>
            <person name="Yu G."/>
            <person name="Miranda M."/>
            <person name="Quach H.L."/>
            <person name="Tripp M."/>
            <person name="Chang C.H."/>
            <person name="Lee J.M."/>
            <person name="Toriumi M.J."/>
            <person name="Chan M.M."/>
            <person name="Tang C.C."/>
            <person name="Onodera C.S."/>
            <person name="Deng J.M."/>
            <person name="Akiyama K."/>
            <person name="Ansari Y."/>
            <person name="Arakawa T."/>
            <person name="Banh J."/>
            <person name="Banno F."/>
            <person name="Bowser L."/>
            <person name="Brooks S.Y."/>
            <person name="Carninci P."/>
            <person name="Chao Q."/>
            <person name="Choy N."/>
            <person name="Enju A."/>
            <person name="Goldsmith A.D."/>
            <person name="Gurjal M."/>
            <person name="Hansen N.F."/>
            <person name="Hayashizaki Y."/>
            <person name="Johnson-Hopson C."/>
            <person name="Hsuan V.W."/>
            <person name="Iida K."/>
            <person name="Karnes M."/>
            <person name="Khan S."/>
            <person name="Koesema E."/>
            <person name="Ishida J."/>
            <person name="Jiang P.X."/>
            <person name="Jones T."/>
            <person name="Kawai J."/>
            <person name="Kamiya A."/>
            <person name="Meyers C."/>
            <person name="Nakajima M."/>
            <person name="Narusaka M."/>
            <person name="Seki M."/>
            <person name="Sakurai T."/>
            <person name="Satou M."/>
            <person name="Tamse R."/>
            <person name="Vaysberg M."/>
            <person name="Wallender E.K."/>
            <person name="Wong C."/>
            <person name="Yamamura Y."/>
            <person name="Yuan S."/>
            <person name="Shinozaki K."/>
            <person name="Davis R.W."/>
            <person name="Theologis A."/>
            <person name="Ecker J.R."/>
        </authorList>
    </citation>
    <scope>NUCLEOTIDE SEQUENCE [LARGE SCALE MRNA]</scope>
    <source>
        <strain>cv. Columbia</strain>
    </source>
</reference>
<reference key="4">
    <citation type="submission" date="2006-07" db="EMBL/GenBank/DDBJ databases">
        <title>Large-scale analysis of RIKEN Arabidopsis full-length (RAFL) cDNAs.</title>
        <authorList>
            <person name="Totoki Y."/>
            <person name="Seki M."/>
            <person name="Ishida J."/>
            <person name="Nakajima M."/>
            <person name="Enju A."/>
            <person name="Kamiya A."/>
            <person name="Narusaka M."/>
            <person name="Shin-i T."/>
            <person name="Nakagawa M."/>
            <person name="Sakamoto N."/>
            <person name="Oishi K."/>
            <person name="Kohara Y."/>
            <person name="Kobayashi M."/>
            <person name="Toyoda A."/>
            <person name="Sakaki Y."/>
            <person name="Sakurai T."/>
            <person name="Iida K."/>
            <person name="Akiyama K."/>
            <person name="Satou M."/>
            <person name="Toyoda T."/>
            <person name="Konagaya A."/>
            <person name="Carninci P."/>
            <person name="Kawai J."/>
            <person name="Hayashizaki Y."/>
            <person name="Shinozaki K."/>
        </authorList>
    </citation>
    <scope>NUCLEOTIDE SEQUENCE [LARGE SCALE MRNA]</scope>
    <source>
        <strain>cv. Columbia</strain>
    </source>
</reference>
<reference key="5">
    <citation type="journal article" date="2011" name="Plant Cell">
        <title>Sphingolipids in the root play an important role in regulating the leaf ionome in Arabidopsis thaliana.</title>
        <authorList>
            <person name="Chao D.Y."/>
            <person name="Gable K."/>
            <person name="Chen M."/>
            <person name="Baxter I."/>
            <person name="Dietrich C.R."/>
            <person name="Cahoon E.B."/>
            <person name="Guerinot M.L."/>
            <person name="Lahner B."/>
            <person name="Lu S."/>
            <person name="Markham J.E."/>
            <person name="Morrissey J."/>
            <person name="Han G."/>
            <person name="Gupta S.D."/>
            <person name="Harmon J.M."/>
            <person name="Jaworski J.G."/>
            <person name="Dunn T.M."/>
            <person name="Salt D.E."/>
        </authorList>
    </citation>
    <scope>FUNCTION</scope>
    <scope>CATALYTIC ACTIVITY</scope>
    <scope>STEREOSPECIFICITY</scope>
    <scope>SUBCELLULAR LOCATION</scope>
    <scope>TISSUE SPECIFICITY</scope>
    <scope>DISRUPTION PHENOTYPE</scope>
</reference>
<sequence length="326" mass="34980">MAAISPLFLLFLIPIIPLSLLAILALIVRPRPIKIPIKSRHAFITGGSSGIGLALAHRAASEGARVSILARSGSKLEEAKKSIQLATGVEVATFSADVRDYDAVSKAIDESGPIDVLIVNQGVFTAKELVKHSPEDVKFTIDVNLVGSFNVIKAALPAMKARKDRGPASISLVSSQAGQVGVYGYAAYSASKFGLQGLAQALQQEVISDDIHVTLIFPPDTNTPGFEEEQKSRPEVTAIIAASSGSMETEEVAKKAMDGIKAGNFTVSCNFEGFLLSLATTGMSPQRSFWLAFLEVITAGPIRLIALFFQWDWYKAIEKWSKTKTK</sequence>
<accession>Q0WRJ2</accession>
<accession>Q9M7S9</accession>